<dbReference type="EC" id="3.1.1.96" evidence="1"/>
<dbReference type="EMBL" id="CP001113">
    <property type="protein sequence ID" value="ACF64012.1"/>
    <property type="molecule type" value="Genomic_DNA"/>
</dbReference>
<dbReference type="RefSeq" id="WP_000560969.1">
    <property type="nucleotide sequence ID" value="NZ_CCMR01000001.1"/>
</dbReference>
<dbReference type="SMR" id="B4SZX0"/>
<dbReference type="KEGG" id="see:SNSL254_A4306"/>
<dbReference type="HOGENOM" id="CLU_076901_1_0_6"/>
<dbReference type="Proteomes" id="UP000008824">
    <property type="component" value="Chromosome"/>
</dbReference>
<dbReference type="GO" id="GO:0005737">
    <property type="term" value="C:cytoplasm"/>
    <property type="evidence" value="ECO:0007669"/>
    <property type="project" value="UniProtKB-SubCell"/>
</dbReference>
<dbReference type="GO" id="GO:0051500">
    <property type="term" value="F:D-tyrosyl-tRNA(Tyr) deacylase activity"/>
    <property type="evidence" value="ECO:0007669"/>
    <property type="project" value="TreeGrafter"/>
</dbReference>
<dbReference type="GO" id="GO:0106026">
    <property type="term" value="F:Gly-tRNA(Ala) deacylase activity"/>
    <property type="evidence" value="ECO:0007669"/>
    <property type="project" value="UniProtKB-UniRule"/>
</dbReference>
<dbReference type="GO" id="GO:0043908">
    <property type="term" value="F:Ser(Gly)-tRNA(Ala) hydrolase activity"/>
    <property type="evidence" value="ECO:0007669"/>
    <property type="project" value="UniProtKB-UniRule"/>
</dbReference>
<dbReference type="GO" id="GO:0000049">
    <property type="term" value="F:tRNA binding"/>
    <property type="evidence" value="ECO:0007669"/>
    <property type="project" value="UniProtKB-UniRule"/>
</dbReference>
<dbReference type="GO" id="GO:0019478">
    <property type="term" value="P:D-amino acid catabolic process"/>
    <property type="evidence" value="ECO:0007669"/>
    <property type="project" value="UniProtKB-UniRule"/>
</dbReference>
<dbReference type="CDD" id="cd00563">
    <property type="entry name" value="Dtyr_deacylase"/>
    <property type="match status" value="1"/>
</dbReference>
<dbReference type="FunFam" id="3.50.80.10:FF:000001">
    <property type="entry name" value="D-aminoacyl-tRNA deacylase"/>
    <property type="match status" value="1"/>
</dbReference>
<dbReference type="Gene3D" id="3.50.80.10">
    <property type="entry name" value="D-tyrosyl-tRNA(Tyr) deacylase"/>
    <property type="match status" value="1"/>
</dbReference>
<dbReference type="HAMAP" id="MF_00518">
    <property type="entry name" value="Deacylase_Dtd"/>
    <property type="match status" value="1"/>
</dbReference>
<dbReference type="InterPro" id="IPR003732">
    <property type="entry name" value="Daa-tRNA_deacyls_DTD"/>
</dbReference>
<dbReference type="InterPro" id="IPR023509">
    <property type="entry name" value="DTD-like_sf"/>
</dbReference>
<dbReference type="NCBIfam" id="TIGR00256">
    <property type="entry name" value="D-aminoacyl-tRNA deacylase"/>
    <property type="match status" value="1"/>
</dbReference>
<dbReference type="PANTHER" id="PTHR10472:SF5">
    <property type="entry name" value="D-AMINOACYL-TRNA DEACYLASE 1"/>
    <property type="match status" value="1"/>
</dbReference>
<dbReference type="PANTHER" id="PTHR10472">
    <property type="entry name" value="D-TYROSYL-TRNA TYR DEACYLASE"/>
    <property type="match status" value="1"/>
</dbReference>
<dbReference type="Pfam" id="PF02580">
    <property type="entry name" value="Tyr_Deacylase"/>
    <property type="match status" value="1"/>
</dbReference>
<dbReference type="SUPFAM" id="SSF69500">
    <property type="entry name" value="DTD-like"/>
    <property type="match status" value="1"/>
</dbReference>
<evidence type="ECO:0000255" key="1">
    <source>
        <dbReference type="HAMAP-Rule" id="MF_00518"/>
    </source>
</evidence>
<proteinExistence type="inferred from homology"/>
<reference key="1">
    <citation type="journal article" date="2011" name="J. Bacteriol.">
        <title>Comparative genomics of 28 Salmonella enterica isolates: evidence for CRISPR-mediated adaptive sublineage evolution.</title>
        <authorList>
            <person name="Fricke W.F."/>
            <person name="Mammel M.K."/>
            <person name="McDermott P.F."/>
            <person name="Tartera C."/>
            <person name="White D.G."/>
            <person name="Leclerc J.E."/>
            <person name="Ravel J."/>
            <person name="Cebula T.A."/>
        </authorList>
    </citation>
    <scope>NUCLEOTIDE SEQUENCE [LARGE SCALE GENOMIC DNA]</scope>
    <source>
        <strain>SL254</strain>
    </source>
</reference>
<accession>B4SZX0</accession>
<sequence>MIALIQRVTRASVTVEDEVTGEIGPGLLVLLGVEKEDDEQKANRLCERVLGYRIFSDADGKMNLNVQQAGGSVLVVSQFTLAADTERGMRPSFSGGAAPDRAQALYEYFVERCRQQAINTQTGRFAADMQVELVNDGPVTFWLQV</sequence>
<gene>
    <name evidence="1" type="primary">dtd</name>
    <name type="ordered locus">SNSL254_A4306</name>
</gene>
<feature type="chain" id="PRO_1000127570" description="D-aminoacyl-tRNA deacylase">
    <location>
        <begin position="1"/>
        <end position="145"/>
    </location>
</feature>
<feature type="short sequence motif" description="Gly-cisPro motif, important for rejection of L-amino acids" evidence="1">
    <location>
        <begin position="137"/>
        <end position="138"/>
    </location>
</feature>
<protein>
    <recommendedName>
        <fullName evidence="1">D-aminoacyl-tRNA deacylase</fullName>
        <shortName evidence="1">DTD</shortName>
        <ecNumber evidence="1">3.1.1.96</ecNumber>
    </recommendedName>
    <alternativeName>
        <fullName evidence="1">Gly-tRNA(Ala) deacylase</fullName>
    </alternativeName>
</protein>
<comment type="function">
    <text evidence="1">An aminoacyl-tRNA editing enzyme that deacylates mischarged D-aminoacyl-tRNAs. Also deacylates mischarged glycyl-tRNA(Ala), protecting cells against glycine mischarging by AlaRS. Acts via tRNA-based rather than protein-based catalysis; rejects L-amino acids rather than detecting D-amino acids in the active site. By recycling D-aminoacyl-tRNA to D-amino acids and free tRNA molecules, this enzyme counteracts the toxicity associated with the formation of D-aminoacyl-tRNA entities in vivo and helps enforce protein L-homochirality.</text>
</comment>
<comment type="catalytic activity">
    <reaction evidence="1">
        <text>glycyl-tRNA(Ala) + H2O = tRNA(Ala) + glycine + H(+)</text>
        <dbReference type="Rhea" id="RHEA:53744"/>
        <dbReference type="Rhea" id="RHEA-COMP:9657"/>
        <dbReference type="Rhea" id="RHEA-COMP:13640"/>
        <dbReference type="ChEBI" id="CHEBI:15377"/>
        <dbReference type="ChEBI" id="CHEBI:15378"/>
        <dbReference type="ChEBI" id="CHEBI:57305"/>
        <dbReference type="ChEBI" id="CHEBI:78442"/>
        <dbReference type="ChEBI" id="CHEBI:78522"/>
        <dbReference type="EC" id="3.1.1.96"/>
    </reaction>
</comment>
<comment type="catalytic activity">
    <reaction evidence="1">
        <text>a D-aminoacyl-tRNA + H2O = a tRNA + a D-alpha-amino acid + H(+)</text>
        <dbReference type="Rhea" id="RHEA:13953"/>
        <dbReference type="Rhea" id="RHEA-COMP:10123"/>
        <dbReference type="Rhea" id="RHEA-COMP:10124"/>
        <dbReference type="ChEBI" id="CHEBI:15377"/>
        <dbReference type="ChEBI" id="CHEBI:15378"/>
        <dbReference type="ChEBI" id="CHEBI:59871"/>
        <dbReference type="ChEBI" id="CHEBI:78442"/>
        <dbReference type="ChEBI" id="CHEBI:79333"/>
        <dbReference type="EC" id="3.1.1.96"/>
    </reaction>
</comment>
<comment type="subunit">
    <text evidence="1">Homodimer.</text>
</comment>
<comment type="subcellular location">
    <subcellularLocation>
        <location evidence="1">Cytoplasm</location>
    </subcellularLocation>
</comment>
<comment type="domain">
    <text evidence="1">A Gly-cisPro motif from one monomer fits into the active site of the other monomer to allow specific chiral rejection of L-amino acids.</text>
</comment>
<comment type="similarity">
    <text evidence="1">Belongs to the DTD family.</text>
</comment>
<name>DTD_SALNS</name>
<organism>
    <name type="scientific">Salmonella newport (strain SL254)</name>
    <dbReference type="NCBI Taxonomy" id="423368"/>
    <lineage>
        <taxon>Bacteria</taxon>
        <taxon>Pseudomonadati</taxon>
        <taxon>Pseudomonadota</taxon>
        <taxon>Gammaproteobacteria</taxon>
        <taxon>Enterobacterales</taxon>
        <taxon>Enterobacteriaceae</taxon>
        <taxon>Salmonella</taxon>
    </lineage>
</organism>
<keyword id="KW-0963">Cytoplasm</keyword>
<keyword id="KW-0378">Hydrolase</keyword>
<keyword id="KW-0694">RNA-binding</keyword>
<keyword id="KW-0820">tRNA-binding</keyword>